<name>TATA_ECTM1</name>
<evidence type="ECO:0000255" key="1">
    <source>
        <dbReference type="HAMAP-Rule" id="MF_00236"/>
    </source>
</evidence>
<evidence type="ECO:0000256" key="2">
    <source>
        <dbReference type="SAM" id="MobiDB-lite"/>
    </source>
</evidence>
<sequence>MGFGGISIWQLLIILLIVVMLFGTKRLKSLGSDLGDAIKGFRKSMDNGEAEKPAVEEPKGQTIDAQARKVEEPAKKD</sequence>
<keyword id="KW-0997">Cell inner membrane</keyword>
<keyword id="KW-1003">Cell membrane</keyword>
<keyword id="KW-0472">Membrane</keyword>
<keyword id="KW-0653">Protein transport</keyword>
<keyword id="KW-0811">Translocation</keyword>
<keyword id="KW-0812">Transmembrane</keyword>
<keyword id="KW-1133">Transmembrane helix</keyword>
<keyword id="KW-0813">Transport</keyword>
<gene>
    <name evidence="1" type="primary">tatA</name>
    <name type="ordered locus">Pmen_0518</name>
</gene>
<dbReference type="EMBL" id="CP000680">
    <property type="protein sequence ID" value="ABP83288.1"/>
    <property type="molecule type" value="Genomic_DNA"/>
</dbReference>
<dbReference type="SMR" id="A4XPM2"/>
<dbReference type="STRING" id="399739.Pmen_0518"/>
<dbReference type="KEGG" id="pmy:Pmen_0518"/>
<dbReference type="eggNOG" id="COG1826">
    <property type="taxonomic scope" value="Bacteria"/>
</dbReference>
<dbReference type="HOGENOM" id="CLU_086034_5_1_6"/>
<dbReference type="OrthoDB" id="7066617at2"/>
<dbReference type="GO" id="GO:0033281">
    <property type="term" value="C:TAT protein transport complex"/>
    <property type="evidence" value="ECO:0007669"/>
    <property type="project" value="UniProtKB-UniRule"/>
</dbReference>
<dbReference type="GO" id="GO:0008320">
    <property type="term" value="F:protein transmembrane transporter activity"/>
    <property type="evidence" value="ECO:0007669"/>
    <property type="project" value="UniProtKB-UniRule"/>
</dbReference>
<dbReference type="GO" id="GO:0043953">
    <property type="term" value="P:protein transport by the Tat complex"/>
    <property type="evidence" value="ECO:0007669"/>
    <property type="project" value="UniProtKB-UniRule"/>
</dbReference>
<dbReference type="Gene3D" id="1.20.5.3310">
    <property type="match status" value="1"/>
</dbReference>
<dbReference type="HAMAP" id="MF_00236">
    <property type="entry name" value="TatA_E"/>
    <property type="match status" value="1"/>
</dbReference>
<dbReference type="InterPro" id="IPR003369">
    <property type="entry name" value="TatA/B/E"/>
</dbReference>
<dbReference type="InterPro" id="IPR006312">
    <property type="entry name" value="TatA/E"/>
</dbReference>
<dbReference type="NCBIfam" id="TIGR01411">
    <property type="entry name" value="tatAE"/>
    <property type="match status" value="1"/>
</dbReference>
<dbReference type="PANTHER" id="PTHR42982">
    <property type="entry name" value="SEC-INDEPENDENT PROTEIN TRANSLOCASE PROTEIN TATA"/>
    <property type="match status" value="1"/>
</dbReference>
<dbReference type="PANTHER" id="PTHR42982:SF1">
    <property type="entry name" value="SEC-INDEPENDENT PROTEIN TRANSLOCASE PROTEIN TATA"/>
    <property type="match status" value="1"/>
</dbReference>
<dbReference type="Pfam" id="PF02416">
    <property type="entry name" value="TatA_B_E"/>
    <property type="match status" value="1"/>
</dbReference>
<accession>A4XPM2</accession>
<organism>
    <name type="scientific">Ectopseudomonas mendocina (strain ymp)</name>
    <name type="common">Pseudomonas mendocina</name>
    <dbReference type="NCBI Taxonomy" id="399739"/>
    <lineage>
        <taxon>Bacteria</taxon>
        <taxon>Pseudomonadati</taxon>
        <taxon>Pseudomonadota</taxon>
        <taxon>Gammaproteobacteria</taxon>
        <taxon>Pseudomonadales</taxon>
        <taxon>Pseudomonadaceae</taxon>
        <taxon>Ectopseudomonas</taxon>
    </lineage>
</organism>
<comment type="function">
    <text evidence="1">Part of the twin-arginine translocation (Tat) system that transports large folded proteins containing a characteristic twin-arginine motif in their signal peptide across membranes. TatA could form the protein-conducting channel of the Tat system.</text>
</comment>
<comment type="subunit">
    <text evidence="1">The Tat system comprises two distinct complexes: a TatABC complex, containing multiple copies of TatA, TatB and TatC subunits, and a separate TatA complex, containing only TatA subunits. Substrates initially bind to the TatABC complex, which probably triggers association of the separate TatA complex to form the active translocon.</text>
</comment>
<comment type="subcellular location">
    <subcellularLocation>
        <location evidence="1">Cell inner membrane</location>
        <topology evidence="1">Single-pass membrane protein</topology>
    </subcellularLocation>
</comment>
<comment type="similarity">
    <text evidence="1">Belongs to the TatA/E family.</text>
</comment>
<feature type="chain" id="PRO_0000336639" description="Sec-independent protein translocase protein TatA">
    <location>
        <begin position="1"/>
        <end position="77"/>
    </location>
</feature>
<feature type="transmembrane region" description="Helical" evidence="1">
    <location>
        <begin position="2"/>
        <end position="22"/>
    </location>
</feature>
<feature type="region of interest" description="Disordered" evidence="2">
    <location>
        <begin position="46"/>
        <end position="77"/>
    </location>
</feature>
<feature type="compositionally biased region" description="Basic and acidic residues" evidence="2">
    <location>
        <begin position="46"/>
        <end position="59"/>
    </location>
</feature>
<feature type="compositionally biased region" description="Basic and acidic residues" evidence="2">
    <location>
        <begin position="66"/>
        <end position="77"/>
    </location>
</feature>
<reference key="1">
    <citation type="submission" date="2007-04" db="EMBL/GenBank/DDBJ databases">
        <title>Complete sequence of Pseudomonas mendocina ymp.</title>
        <authorList>
            <consortium name="US DOE Joint Genome Institute"/>
            <person name="Copeland A."/>
            <person name="Lucas S."/>
            <person name="Lapidus A."/>
            <person name="Barry K."/>
            <person name="Glavina del Rio T."/>
            <person name="Dalin E."/>
            <person name="Tice H."/>
            <person name="Pitluck S."/>
            <person name="Kiss H."/>
            <person name="Brettin T."/>
            <person name="Detter J.C."/>
            <person name="Bruce D."/>
            <person name="Han C."/>
            <person name="Schmutz J."/>
            <person name="Larimer F."/>
            <person name="Land M."/>
            <person name="Hauser L."/>
            <person name="Kyrpides N."/>
            <person name="Mikhailova N."/>
            <person name="Hersman L."/>
            <person name="Dubois J."/>
            <person name="Maurice P."/>
            <person name="Richardson P."/>
        </authorList>
    </citation>
    <scope>NUCLEOTIDE SEQUENCE [LARGE SCALE GENOMIC DNA]</scope>
    <source>
        <strain>ymp</strain>
    </source>
</reference>
<protein>
    <recommendedName>
        <fullName evidence="1">Sec-independent protein translocase protein TatA</fullName>
    </recommendedName>
</protein>
<proteinExistence type="inferred from homology"/>